<sequence>MKCYFTDHRGEQSPTDGTTLSLTSPESTEESVEVFWPGTIQREGSSPRPGPAIPREEGLYFAARDRGMRDWSSSPSSESSEYQSYSQYQSCCSCMCDEDNAAPQSVCAFYTHVQTVRGVAVAWETEAGFEPVTRKPRIHEAQFIKRQRWNGSSFEMASNTDMRWDLEACKSNCSPEPEDIDLLECCLQELREPPDWLVTTNYGVRCVACCRVLPSLDALLEHAQHGIREGFSCQIFFEEMLERRRAQGQAHDQQLEEEQSPSDNSECSRPQGEVLSAQQQEKQ</sequence>
<keyword id="KW-0968">Cytoplasmic vesicle</keyword>
<keyword id="KW-0472">Membrane</keyword>
<keyword id="KW-1185">Reference proteome</keyword>
<organism>
    <name type="scientific">Homo sapiens</name>
    <name type="common">Human</name>
    <dbReference type="NCBI Taxonomy" id="9606"/>
    <lineage>
        <taxon>Eukaryota</taxon>
        <taxon>Metazoa</taxon>
        <taxon>Chordata</taxon>
        <taxon>Craniata</taxon>
        <taxon>Vertebrata</taxon>
        <taxon>Euteleostomi</taxon>
        <taxon>Mammalia</taxon>
        <taxon>Eutheria</taxon>
        <taxon>Euarchontoglires</taxon>
        <taxon>Primates</taxon>
        <taxon>Haplorrhini</taxon>
        <taxon>Catarrhini</taxon>
        <taxon>Hominidae</taxon>
        <taxon>Homo</taxon>
    </lineage>
</organism>
<proteinExistence type="evidence at protein level"/>
<evidence type="ECO:0000250" key="1">
    <source>
        <dbReference type="UniProtKB" id="E9PXT9"/>
    </source>
</evidence>
<evidence type="ECO:0000256" key="2">
    <source>
        <dbReference type="SAM" id="MobiDB-lite"/>
    </source>
</evidence>
<evidence type="ECO:0000269" key="3">
    <source>
    </source>
</evidence>
<evidence type="ECO:0000303" key="4">
    <source>
    </source>
</evidence>
<evidence type="ECO:0000305" key="5"/>
<evidence type="ECO:0000312" key="6">
    <source>
        <dbReference type="HGNC" id="HGNC:19736"/>
    </source>
</evidence>
<accession>A6NMN3</accession>
<accession>Q86WY6</accession>
<accession>Q8N6K8</accession>
<feature type="chain" id="PRO_0000310494" description="Protein FAM170B">
    <location>
        <begin position="1"/>
        <end position="283"/>
    </location>
</feature>
<feature type="region of interest" description="Disordered" evidence="2">
    <location>
        <begin position="1"/>
        <end position="58"/>
    </location>
</feature>
<feature type="region of interest" description="Disordered" evidence="2">
    <location>
        <begin position="246"/>
        <end position="283"/>
    </location>
</feature>
<feature type="compositionally biased region" description="Basic and acidic residues" evidence="2">
    <location>
        <begin position="1"/>
        <end position="11"/>
    </location>
</feature>
<feature type="sequence variant" id="VAR_037062" description="In dbSNP:rs17773851.">
    <original>R</original>
    <variation>L</variation>
    <location>
        <position position="69"/>
    </location>
</feature>
<feature type="sequence conflict" description="In Ref. 2; AAH29839." evidence="5" ref="2">
    <original>S</original>
    <variation>F</variation>
    <location>
        <position position="84"/>
    </location>
</feature>
<gene>
    <name evidence="6" type="primary">FAM170B</name>
    <name evidence="6" type="synonym">C10orf73</name>
</gene>
<name>F170B_HUMAN</name>
<reference key="1">
    <citation type="journal article" date="2004" name="Nature">
        <title>The DNA sequence and comparative analysis of human chromosome 10.</title>
        <authorList>
            <person name="Deloukas P."/>
            <person name="Earthrowl M.E."/>
            <person name="Grafham D.V."/>
            <person name="Rubenfield M."/>
            <person name="French L."/>
            <person name="Steward C.A."/>
            <person name="Sims S.K."/>
            <person name="Jones M.C."/>
            <person name="Searle S."/>
            <person name="Scott C."/>
            <person name="Howe K."/>
            <person name="Hunt S.E."/>
            <person name="Andrews T.D."/>
            <person name="Gilbert J.G.R."/>
            <person name="Swarbreck D."/>
            <person name="Ashurst J.L."/>
            <person name="Taylor A."/>
            <person name="Battles J."/>
            <person name="Bird C.P."/>
            <person name="Ainscough R."/>
            <person name="Almeida J.P."/>
            <person name="Ashwell R.I.S."/>
            <person name="Ambrose K.D."/>
            <person name="Babbage A.K."/>
            <person name="Bagguley C.L."/>
            <person name="Bailey J."/>
            <person name="Banerjee R."/>
            <person name="Bates K."/>
            <person name="Beasley H."/>
            <person name="Bray-Allen S."/>
            <person name="Brown A.J."/>
            <person name="Brown J.Y."/>
            <person name="Burford D.C."/>
            <person name="Burrill W."/>
            <person name="Burton J."/>
            <person name="Cahill P."/>
            <person name="Camire D."/>
            <person name="Carter N.P."/>
            <person name="Chapman J.C."/>
            <person name="Clark S.Y."/>
            <person name="Clarke G."/>
            <person name="Clee C.M."/>
            <person name="Clegg S."/>
            <person name="Corby N."/>
            <person name="Coulson A."/>
            <person name="Dhami P."/>
            <person name="Dutta I."/>
            <person name="Dunn M."/>
            <person name="Faulkner L."/>
            <person name="Frankish A."/>
            <person name="Frankland J.A."/>
            <person name="Garner P."/>
            <person name="Garnett J."/>
            <person name="Gribble S."/>
            <person name="Griffiths C."/>
            <person name="Grocock R."/>
            <person name="Gustafson E."/>
            <person name="Hammond S."/>
            <person name="Harley J.L."/>
            <person name="Hart E."/>
            <person name="Heath P.D."/>
            <person name="Ho T.P."/>
            <person name="Hopkins B."/>
            <person name="Horne J."/>
            <person name="Howden P.J."/>
            <person name="Huckle E."/>
            <person name="Hynds C."/>
            <person name="Johnson C."/>
            <person name="Johnson D."/>
            <person name="Kana A."/>
            <person name="Kay M."/>
            <person name="Kimberley A.M."/>
            <person name="Kershaw J.K."/>
            <person name="Kokkinaki M."/>
            <person name="Laird G.K."/>
            <person name="Lawlor S."/>
            <person name="Lee H.M."/>
            <person name="Leongamornlert D.A."/>
            <person name="Laird G."/>
            <person name="Lloyd C."/>
            <person name="Lloyd D.M."/>
            <person name="Loveland J."/>
            <person name="Lovell J."/>
            <person name="McLaren S."/>
            <person name="McLay K.E."/>
            <person name="McMurray A."/>
            <person name="Mashreghi-Mohammadi M."/>
            <person name="Matthews L."/>
            <person name="Milne S."/>
            <person name="Nickerson T."/>
            <person name="Nguyen M."/>
            <person name="Overton-Larty E."/>
            <person name="Palmer S.A."/>
            <person name="Pearce A.V."/>
            <person name="Peck A.I."/>
            <person name="Pelan S."/>
            <person name="Phillimore B."/>
            <person name="Porter K."/>
            <person name="Rice C.M."/>
            <person name="Rogosin A."/>
            <person name="Ross M.T."/>
            <person name="Sarafidou T."/>
            <person name="Sehra H.K."/>
            <person name="Shownkeen R."/>
            <person name="Skuce C.D."/>
            <person name="Smith M."/>
            <person name="Standring L."/>
            <person name="Sycamore N."/>
            <person name="Tester J."/>
            <person name="Thorpe A."/>
            <person name="Torcasso W."/>
            <person name="Tracey A."/>
            <person name="Tromans A."/>
            <person name="Tsolas J."/>
            <person name="Wall M."/>
            <person name="Walsh J."/>
            <person name="Wang H."/>
            <person name="Weinstock K."/>
            <person name="West A.P."/>
            <person name="Willey D.L."/>
            <person name="Whitehead S.L."/>
            <person name="Wilming L."/>
            <person name="Wray P.W."/>
            <person name="Young L."/>
            <person name="Chen Y."/>
            <person name="Lovering R.C."/>
            <person name="Moschonas N.K."/>
            <person name="Siebert R."/>
            <person name="Fechtel K."/>
            <person name="Bentley D."/>
            <person name="Durbin R.M."/>
            <person name="Hubbard T."/>
            <person name="Doucette-Stamm L."/>
            <person name="Beck S."/>
            <person name="Smith D.R."/>
            <person name="Rogers J."/>
        </authorList>
    </citation>
    <scope>NUCLEOTIDE SEQUENCE [LARGE SCALE GENOMIC DNA]</scope>
</reference>
<reference key="2">
    <citation type="journal article" date="2004" name="Genome Res.">
        <title>The status, quality, and expansion of the NIH full-length cDNA project: the Mammalian Gene Collection (MGC).</title>
        <authorList>
            <consortium name="The MGC Project Team"/>
        </authorList>
    </citation>
    <scope>NUCLEOTIDE SEQUENCE [LARGE SCALE MRNA]</scope>
    <source>
        <tissue>Brain</tissue>
        <tissue>Testis</tissue>
    </source>
</reference>
<reference key="3">
    <citation type="journal article" date="2015" name="Mol. Reprod. Dev.">
        <title>FAM170B, a novel acrosomal protein involved in fertilization in mice.</title>
        <authorList>
            <person name="Li Y."/>
            <person name="Lin S."/>
            <person name="Luo M."/>
            <person name="Guo H."/>
            <person name="Chen J."/>
            <person name="Ma Q."/>
            <person name="Gu Y."/>
            <person name="Jiang Z."/>
            <person name="Gui Y."/>
        </authorList>
    </citation>
    <scope>TISSUE SPECIFICITY</scope>
    <scope>SUBCELLULAR LOCATION</scope>
    <scope>INTERACTION WITH GOPC</scope>
</reference>
<dbReference type="EMBL" id="AC084727">
    <property type="status" value="NOT_ANNOTATED_CDS"/>
    <property type="molecule type" value="Genomic_DNA"/>
</dbReference>
<dbReference type="EMBL" id="BC029839">
    <property type="protein sequence ID" value="AAH29839.1"/>
    <property type="status" value="ALT_INIT"/>
    <property type="molecule type" value="mRNA"/>
</dbReference>
<dbReference type="EMBL" id="BC047597">
    <property type="protein sequence ID" value="AAH47597.1"/>
    <property type="status" value="ALT_INIT"/>
    <property type="molecule type" value="mRNA"/>
</dbReference>
<dbReference type="CCDS" id="CCDS53536.1"/>
<dbReference type="RefSeq" id="NP_001157956.1">
    <property type="nucleotide sequence ID" value="NM_001164484.2"/>
</dbReference>
<dbReference type="FunCoup" id="A6NMN3">
    <property type="interactions" value="9"/>
</dbReference>
<dbReference type="STRING" id="9606.ENSP00000308292"/>
<dbReference type="iPTMnet" id="A6NMN3"/>
<dbReference type="PhosphoSitePlus" id="A6NMN3"/>
<dbReference type="BioMuta" id="FAM170B"/>
<dbReference type="MassIVE" id="A6NMN3"/>
<dbReference type="PaxDb" id="9606-ENSP00000308292"/>
<dbReference type="PeptideAtlas" id="A6NMN3"/>
<dbReference type="TopDownProteomics" id="A6NMN3"/>
<dbReference type="Antibodypedia" id="61247">
    <property type="antibodies" value="32 antibodies from 9 providers"/>
</dbReference>
<dbReference type="DNASU" id="170370"/>
<dbReference type="Ensembl" id="ENST00000311787.6">
    <property type="protein sequence ID" value="ENSP00000308292.6"/>
    <property type="gene ID" value="ENSG00000172538.7"/>
</dbReference>
<dbReference type="GeneID" id="170370"/>
<dbReference type="KEGG" id="hsa:170370"/>
<dbReference type="MANE-Select" id="ENST00000311787.6">
    <property type="protein sequence ID" value="ENSP00000308292.6"/>
    <property type="RefSeq nucleotide sequence ID" value="NM_001164484.2"/>
    <property type="RefSeq protein sequence ID" value="NP_001157956.1"/>
</dbReference>
<dbReference type="UCSC" id="uc001jhj.4">
    <property type="organism name" value="human"/>
</dbReference>
<dbReference type="AGR" id="HGNC:19736"/>
<dbReference type="CTD" id="170370"/>
<dbReference type="DisGeNET" id="170370"/>
<dbReference type="GeneCards" id="FAM170B"/>
<dbReference type="HGNC" id="HGNC:19736">
    <property type="gene designation" value="FAM170B"/>
</dbReference>
<dbReference type="HPA" id="ENSG00000172538">
    <property type="expression patterns" value="Tissue enriched (testis)"/>
</dbReference>
<dbReference type="neXtProt" id="NX_A6NMN3"/>
<dbReference type="PharmGKB" id="PA162387168"/>
<dbReference type="VEuPathDB" id="HostDB:ENSG00000172538"/>
<dbReference type="eggNOG" id="ENOG502S6PC">
    <property type="taxonomic scope" value="Eukaryota"/>
</dbReference>
<dbReference type="GeneTree" id="ENSGT00940000162512"/>
<dbReference type="HOGENOM" id="CLU_062038_1_0_1"/>
<dbReference type="InParanoid" id="A6NMN3"/>
<dbReference type="OMA" id="LYTHVQT"/>
<dbReference type="OrthoDB" id="8898641at2759"/>
<dbReference type="PAN-GO" id="A6NMN3">
    <property type="GO annotations" value="2 GO annotations based on evolutionary models"/>
</dbReference>
<dbReference type="PhylomeDB" id="A6NMN3"/>
<dbReference type="TreeFam" id="TF337124"/>
<dbReference type="PathwayCommons" id="A6NMN3"/>
<dbReference type="BioGRID-ORCS" id="170370">
    <property type="hits" value="16 hits in 1148 CRISPR screens"/>
</dbReference>
<dbReference type="GenomeRNAi" id="170370"/>
<dbReference type="Pharos" id="A6NMN3">
    <property type="development level" value="Tdark"/>
</dbReference>
<dbReference type="PRO" id="PR:A6NMN3"/>
<dbReference type="Proteomes" id="UP000005640">
    <property type="component" value="Chromosome 10"/>
</dbReference>
<dbReference type="RNAct" id="A6NMN3">
    <property type="molecule type" value="protein"/>
</dbReference>
<dbReference type="Bgee" id="ENSG00000172538">
    <property type="expression patterns" value="Expressed in male germ line stem cell (sensu Vertebrata) in testis and 15 other cell types or tissues"/>
</dbReference>
<dbReference type="GO" id="GO:0001669">
    <property type="term" value="C:acrosomal vesicle"/>
    <property type="evidence" value="ECO:0000314"/>
    <property type="project" value="UniProtKB"/>
</dbReference>
<dbReference type="GO" id="GO:0002081">
    <property type="term" value="C:outer acrosomal membrane"/>
    <property type="evidence" value="ECO:0000250"/>
    <property type="project" value="UniProtKB"/>
</dbReference>
<dbReference type="GO" id="GO:0009566">
    <property type="term" value="P:fertilization"/>
    <property type="evidence" value="ECO:0000318"/>
    <property type="project" value="GO_Central"/>
</dbReference>
<dbReference type="GO" id="GO:2000344">
    <property type="term" value="P:positive regulation of acrosome reaction"/>
    <property type="evidence" value="ECO:0000250"/>
    <property type="project" value="UniProtKB"/>
</dbReference>
<dbReference type="GO" id="GO:0080154">
    <property type="term" value="P:regulation of fertilization"/>
    <property type="evidence" value="ECO:0000250"/>
    <property type="project" value="UniProtKB"/>
</dbReference>
<dbReference type="InterPro" id="IPR040879">
    <property type="entry name" value="Spt46-like"/>
</dbReference>
<dbReference type="PANTHER" id="PTHR33517:SF2">
    <property type="entry name" value="PROTEIN FAM170B"/>
    <property type="match status" value="1"/>
</dbReference>
<dbReference type="PANTHER" id="PTHR33517">
    <property type="entry name" value="PROTEIN FAM170B-RELATED"/>
    <property type="match status" value="1"/>
</dbReference>
<dbReference type="Pfam" id="PF17734">
    <property type="entry name" value="Spt46"/>
    <property type="match status" value="1"/>
</dbReference>
<comment type="function">
    <text evidence="1">Plays a role in fertilization through the acrosome reaction.</text>
</comment>
<comment type="subunit">
    <text evidence="3">Interacts with GOPC.</text>
</comment>
<comment type="subcellular location">
    <subcellularLocation>
        <location evidence="3">Cytoplasmic vesicle</location>
        <location evidence="3">Secretory vesicle</location>
        <location evidence="3">Acrosome</location>
    </subcellularLocation>
    <subcellularLocation>
        <location evidence="1">Cytoplasmic vesicle</location>
        <location evidence="1">Secretory vesicle</location>
        <location evidence="1">Acrosome outer membrane</location>
    </subcellularLocation>
</comment>
<comment type="tissue specificity">
    <text evidence="3">Exclusively expressed in adult testis.</text>
</comment>
<comment type="similarity">
    <text evidence="5">Belongs to the FAM170 family.</text>
</comment>
<comment type="sequence caution" evidence="5">
    <conflict type="erroneous initiation">
        <sequence resource="EMBL-CDS" id="AAH29839"/>
    </conflict>
    <text>Extended N-terminus.</text>
</comment>
<comment type="sequence caution" evidence="5">
    <conflict type="erroneous initiation">
        <sequence resource="EMBL-CDS" id="AAH47597"/>
    </conflict>
    <text>Extended N-terminus.</text>
</comment>
<protein>
    <recommendedName>
        <fullName evidence="5">Protein FAM170B</fullName>
    </recommendedName>
    <alternativeName>
        <fullName evidence="4">Acrosome-related protein</fullName>
    </alternativeName>
</protein>